<accession>Q3MDN9</accession>
<organism>
    <name type="scientific">Trichormus variabilis (strain ATCC 29413 / PCC 7937)</name>
    <name type="common">Anabaena variabilis</name>
    <dbReference type="NCBI Taxonomy" id="240292"/>
    <lineage>
        <taxon>Bacteria</taxon>
        <taxon>Bacillati</taxon>
        <taxon>Cyanobacteriota</taxon>
        <taxon>Cyanophyceae</taxon>
        <taxon>Nostocales</taxon>
        <taxon>Nostocaceae</taxon>
        <taxon>Trichormus</taxon>
    </lineage>
</organism>
<evidence type="ECO:0000255" key="1">
    <source>
        <dbReference type="HAMAP-Rule" id="MF_00487"/>
    </source>
</evidence>
<sequence length="324" mass="34804">MSSSPDSPPILHRLPRVAIIGAGRVGSTLAQRIAEKNLADVVLLDIVEGMPQGLALDLLEARGIELHNRQIIGTNNYADTSGSQIVVITAGFPRKPGMSRDDLLRTNAKIVVEAAKQAIAYSPCAIFIVVTNPLDVMTYLAWEATGLPRNRIMGMAGVLDSARFETFIALELGVLPADVKAMVLGSHGDLMVPLSRHATVNGIPITELLDAATIERLVERTRNGGAEIVELMQTGGAFFAPASATSLMVESILLNQSRLLPVSVYLQGEYGLKDVVIGVPCRLGLNGIESVIELNLSDSEREALQTSAQSVQKNIERWHSTQHS</sequence>
<keyword id="KW-0520">NAD</keyword>
<keyword id="KW-0560">Oxidoreductase</keyword>
<keyword id="KW-0816">Tricarboxylic acid cycle</keyword>
<reference key="1">
    <citation type="journal article" date="2014" name="Stand. Genomic Sci.">
        <title>Complete genome sequence of Anabaena variabilis ATCC 29413.</title>
        <authorList>
            <person name="Thiel T."/>
            <person name="Pratte B.S."/>
            <person name="Zhong J."/>
            <person name="Goodwin L."/>
            <person name="Copeland A."/>
            <person name="Lucas S."/>
            <person name="Han C."/>
            <person name="Pitluck S."/>
            <person name="Land M.L."/>
            <person name="Kyrpides N.C."/>
            <person name="Woyke T."/>
        </authorList>
    </citation>
    <scope>NUCLEOTIDE SEQUENCE [LARGE SCALE GENOMIC DNA]</scope>
    <source>
        <strain>ATCC 29413 / PCC 7937</strain>
    </source>
</reference>
<proteinExistence type="inferred from homology"/>
<name>MDH_TRIV2</name>
<feature type="chain" id="PRO_0000241938" description="Malate dehydrogenase">
    <location>
        <begin position="1"/>
        <end position="324"/>
    </location>
</feature>
<feature type="active site" description="Proton acceptor" evidence="1">
    <location>
        <position position="187"/>
    </location>
</feature>
<feature type="binding site" evidence="1">
    <location>
        <begin position="21"/>
        <end position="26"/>
    </location>
    <ligand>
        <name>NAD(+)</name>
        <dbReference type="ChEBI" id="CHEBI:57540"/>
    </ligand>
</feature>
<feature type="binding site" evidence="1">
    <location>
        <position position="45"/>
    </location>
    <ligand>
        <name>NAD(+)</name>
        <dbReference type="ChEBI" id="CHEBI:57540"/>
    </ligand>
</feature>
<feature type="binding site" evidence="1">
    <location>
        <position position="94"/>
    </location>
    <ligand>
        <name>substrate</name>
    </ligand>
</feature>
<feature type="binding site" evidence="1">
    <location>
        <position position="100"/>
    </location>
    <ligand>
        <name>substrate</name>
    </ligand>
</feature>
<feature type="binding site" evidence="1">
    <location>
        <position position="107"/>
    </location>
    <ligand>
        <name>NAD(+)</name>
        <dbReference type="ChEBI" id="CHEBI:57540"/>
    </ligand>
</feature>
<feature type="binding site" evidence="1">
    <location>
        <begin position="130"/>
        <end position="132"/>
    </location>
    <ligand>
        <name>NAD(+)</name>
        <dbReference type="ChEBI" id="CHEBI:57540"/>
    </ligand>
</feature>
<feature type="binding site" evidence="1">
    <location>
        <position position="132"/>
    </location>
    <ligand>
        <name>substrate</name>
    </ligand>
</feature>
<feature type="binding site" evidence="1">
    <location>
        <position position="163"/>
    </location>
    <ligand>
        <name>substrate</name>
    </ligand>
</feature>
<protein>
    <recommendedName>
        <fullName evidence="1">Malate dehydrogenase</fullName>
        <ecNumber evidence="1">1.1.1.37</ecNumber>
    </recommendedName>
</protein>
<gene>
    <name evidence="1" type="primary">mdh</name>
    <name type="ordered locus">Ava_1273</name>
</gene>
<comment type="function">
    <text evidence="1">Catalyzes the reversible oxidation of malate to oxaloacetate.</text>
</comment>
<comment type="catalytic activity">
    <reaction evidence="1">
        <text>(S)-malate + NAD(+) = oxaloacetate + NADH + H(+)</text>
        <dbReference type="Rhea" id="RHEA:21432"/>
        <dbReference type="ChEBI" id="CHEBI:15378"/>
        <dbReference type="ChEBI" id="CHEBI:15589"/>
        <dbReference type="ChEBI" id="CHEBI:16452"/>
        <dbReference type="ChEBI" id="CHEBI:57540"/>
        <dbReference type="ChEBI" id="CHEBI:57945"/>
        <dbReference type="EC" id="1.1.1.37"/>
    </reaction>
</comment>
<comment type="similarity">
    <text evidence="1">Belongs to the LDH/MDH superfamily. MDH type 3 family.</text>
</comment>
<dbReference type="EC" id="1.1.1.37" evidence="1"/>
<dbReference type="EMBL" id="CP000117">
    <property type="protein sequence ID" value="ABA20897.1"/>
    <property type="molecule type" value="Genomic_DNA"/>
</dbReference>
<dbReference type="SMR" id="Q3MDN9"/>
<dbReference type="STRING" id="240292.Ava_1273"/>
<dbReference type="KEGG" id="ava:Ava_1273"/>
<dbReference type="eggNOG" id="COG0039">
    <property type="taxonomic scope" value="Bacteria"/>
</dbReference>
<dbReference type="HOGENOM" id="CLU_045401_2_1_3"/>
<dbReference type="Proteomes" id="UP000002533">
    <property type="component" value="Chromosome"/>
</dbReference>
<dbReference type="GO" id="GO:0004459">
    <property type="term" value="F:L-lactate dehydrogenase activity"/>
    <property type="evidence" value="ECO:0007669"/>
    <property type="project" value="TreeGrafter"/>
</dbReference>
<dbReference type="GO" id="GO:0030060">
    <property type="term" value="F:L-malate dehydrogenase (NAD+) activity"/>
    <property type="evidence" value="ECO:0007669"/>
    <property type="project" value="UniProtKB-UniRule"/>
</dbReference>
<dbReference type="GO" id="GO:0006089">
    <property type="term" value="P:lactate metabolic process"/>
    <property type="evidence" value="ECO:0007669"/>
    <property type="project" value="TreeGrafter"/>
</dbReference>
<dbReference type="GO" id="GO:0006099">
    <property type="term" value="P:tricarboxylic acid cycle"/>
    <property type="evidence" value="ECO:0007669"/>
    <property type="project" value="UniProtKB-UniRule"/>
</dbReference>
<dbReference type="CDD" id="cd01339">
    <property type="entry name" value="LDH-like_MDH"/>
    <property type="match status" value="1"/>
</dbReference>
<dbReference type="FunFam" id="3.40.50.720:FF:000018">
    <property type="entry name" value="Malate dehydrogenase"/>
    <property type="match status" value="1"/>
</dbReference>
<dbReference type="FunFam" id="3.90.110.10:FF:000004">
    <property type="entry name" value="Malate dehydrogenase"/>
    <property type="match status" value="1"/>
</dbReference>
<dbReference type="Gene3D" id="3.90.110.10">
    <property type="entry name" value="Lactate dehydrogenase/glycoside hydrolase, family 4, C-terminal"/>
    <property type="match status" value="1"/>
</dbReference>
<dbReference type="Gene3D" id="3.40.50.720">
    <property type="entry name" value="NAD(P)-binding Rossmann-like Domain"/>
    <property type="match status" value="1"/>
</dbReference>
<dbReference type="HAMAP" id="MF_00487">
    <property type="entry name" value="Malate_dehydrog_3"/>
    <property type="match status" value="1"/>
</dbReference>
<dbReference type="InterPro" id="IPR001557">
    <property type="entry name" value="L-lactate/malate_DH"/>
</dbReference>
<dbReference type="InterPro" id="IPR022383">
    <property type="entry name" value="Lactate/malate_DH_C"/>
</dbReference>
<dbReference type="InterPro" id="IPR001236">
    <property type="entry name" value="Lactate/malate_DH_N"/>
</dbReference>
<dbReference type="InterPro" id="IPR015955">
    <property type="entry name" value="Lactate_DH/Glyco_Ohase_4_C"/>
</dbReference>
<dbReference type="InterPro" id="IPR011275">
    <property type="entry name" value="Malate_DH_type3"/>
</dbReference>
<dbReference type="InterPro" id="IPR036291">
    <property type="entry name" value="NAD(P)-bd_dom_sf"/>
</dbReference>
<dbReference type="NCBIfam" id="TIGR01763">
    <property type="entry name" value="MalateDH_bact"/>
    <property type="match status" value="1"/>
</dbReference>
<dbReference type="NCBIfam" id="NF004863">
    <property type="entry name" value="PRK06223.1"/>
    <property type="match status" value="1"/>
</dbReference>
<dbReference type="PANTHER" id="PTHR43128">
    <property type="entry name" value="L-2-HYDROXYCARBOXYLATE DEHYDROGENASE (NAD(P)(+))"/>
    <property type="match status" value="1"/>
</dbReference>
<dbReference type="PANTHER" id="PTHR43128:SF16">
    <property type="entry name" value="L-LACTATE DEHYDROGENASE"/>
    <property type="match status" value="1"/>
</dbReference>
<dbReference type="Pfam" id="PF02866">
    <property type="entry name" value="Ldh_1_C"/>
    <property type="match status" value="1"/>
</dbReference>
<dbReference type="Pfam" id="PF00056">
    <property type="entry name" value="Ldh_1_N"/>
    <property type="match status" value="1"/>
</dbReference>
<dbReference type="PIRSF" id="PIRSF000102">
    <property type="entry name" value="Lac_mal_DH"/>
    <property type="match status" value="1"/>
</dbReference>
<dbReference type="PRINTS" id="PR00086">
    <property type="entry name" value="LLDHDRGNASE"/>
</dbReference>
<dbReference type="SUPFAM" id="SSF56327">
    <property type="entry name" value="LDH C-terminal domain-like"/>
    <property type="match status" value="1"/>
</dbReference>
<dbReference type="SUPFAM" id="SSF51735">
    <property type="entry name" value="NAD(P)-binding Rossmann-fold domains"/>
    <property type="match status" value="1"/>
</dbReference>